<name>SICK_DROME</name>
<gene>
    <name type="primary">sick</name>
    <name type="synonym">sickie</name>
    <name type="ORF">CG34343</name>
</gene>
<proteinExistence type="inferred from homology"/>
<evidence type="ECO:0000255" key="1"/>
<evidence type="ECO:0000255" key="2">
    <source>
        <dbReference type="PROSITE-ProRule" id="PRU00044"/>
    </source>
</evidence>
<evidence type="ECO:0000256" key="3">
    <source>
        <dbReference type="SAM" id="MobiDB-lite"/>
    </source>
</evidence>
<evidence type="ECO:0000269" key="4">
    <source>
    </source>
</evidence>
<evidence type="ECO:0000305" key="5"/>
<evidence type="ECO:0000312" key="6">
    <source>
        <dbReference type="FlyBase" id="FBgn0263873"/>
    </source>
</evidence>
<feature type="chain" id="PRO_0000286980" description="Protein sickie">
    <location>
        <begin position="1"/>
        <end position="2197"/>
    </location>
</feature>
<feature type="domain" description="Calponin-homology (CH)" evidence="2">
    <location>
        <begin position="21"/>
        <end position="129"/>
    </location>
</feature>
<feature type="region of interest" description="Disordered" evidence="3">
    <location>
        <begin position="165"/>
        <end position="197"/>
    </location>
</feature>
<feature type="region of interest" description="Disordered" evidence="3">
    <location>
        <begin position="235"/>
        <end position="311"/>
    </location>
</feature>
<feature type="region of interest" description="Disordered" evidence="3">
    <location>
        <begin position="331"/>
        <end position="646"/>
    </location>
</feature>
<feature type="region of interest" description="Disordered" evidence="3">
    <location>
        <begin position="730"/>
        <end position="767"/>
    </location>
</feature>
<feature type="region of interest" description="Disordered" evidence="3">
    <location>
        <begin position="788"/>
        <end position="910"/>
    </location>
</feature>
<feature type="region of interest" description="Disordered" evidence="3">
    <location>
        <begin position="1094"/>
        <end position="1119"/>
    </location>
</feature>
<feature type="region of interest" description="Disordered" evidence="3">
    <location>
        <begin position="1202"/>
        <end position="1223"/>
    </location>
</feature>
<feature type="region of interest" description="Disordered" evidence="3">
    <location>
        <begin position="1373"/>
        <end position="1415"/>
    </location>
</feature>
<feature type="region of interest" description="Disordered" evidence="3">
    <location>
        <begin position="1455"/>
        <end position="1511"/>
    </location>
</feature>
<feature type="region of interest" description="Disordered" evidence="3">
    <location>
        <begin position="1600"/>
        <end position="1633"/>
    </location>
</feature>
<feature type="region of interest" description="Disordered" evidence="3">
    <location>
        <begin position="1648"/>
        <end position="1690"/>
    </location>
</feature>
<feature type="region of interest" description="Disordered" evidence="3">
    <location>
        <begin position="2172"/>
        <end position="2197"/>
    </location>
</feature>
<feature type="coiled-coil region" evidence="1">
    <location>
        <begin position="1262"/>
        <end position="1342"/>
    </location>
</feature>
<feature type="coiled-coil region" evidence="1">
    <location>
        <begin position="1556"/>
        <end position="1591"/>
    </location>
</feature>
<feature type="compositionally biased region" description="Low complexity" evidence="3">
    <location>
        <begin position="175"/>
        <end position="197"/>
    </location>
</feature>
<feature type="compositionally biased region" description="Polar residues" evidence="3">
    <location>
        <begin position="261"/>
        <end position="290"/>
    </location>
</feature>
<feature type="compositionally biased region" description="Low complexity" evidence="3">
    <location>
        <begin position="291"/>
        <end position="304"/>
    </location>
</feature>
<feature type="compositionally biased region" description="Polar residues" evidence="3">
    <location>
        <begin position="331"/>
        <end position="341"/>
    </location>
</feature>
<feature type="compositionally biased region" description="Low complexity" evidence="3">
    <location>
        <begin position="342"/>
        <end position="354"/>
    </location>
</feature>
<feature type="compositionally biased region" description="Low complexity" evidence="3">
    <location>
        <begin position="379"/>
        <end position="398"/>
    </location>
</feature>
<feature type="compositionally biased region" description="Basic and acidic residues" evidence="3">
    <location>
        <begin position="399"/>
        <end position="428"/>
    </location>
</feature>
<feature type="compositionally biased region" description="Polar residues" evidence="3">
    <location>
        <begin position="429"/>
        <end position="441"/>
    </location>
</feature>
<feature type="compositionally biased region" description="Polar residues" evidence="3">
    <location>
        <begin position="561"/>
        <end position="570"/>
    </location>
</feature>
<feature type="compositionally biased region" description="Polar residues" evidence="3">
    <location>
        <begin position="577"/>
        <end position="588"/>
    </location>
</feature>
<feature type="compositionally biased region" description="Polar residues" evidence="3">
    <location>
        <begin position="633"/>
        <end position="644"/>
    </location>
</feature>
<feature type="compositionally biased region" description="Low complexity" evidence="3">
    <location>
        <begin position="755"/>
        <end position="766"/>
    </location>
</feature>
<feature type="compositionally biased region" description="Low complexity" evidence="3">
    <location>
        <begin position="796"/>
        <end position="831"/>
    </location>
</feature>
<feature type="compositionally biased region" description="Low complexity" evidence="3">
    <location>
        <begin position="887"/>
        <end position="904"/>
    </location>
</feature>
<feature type="compositionally biased region" description="Polar residues" evidence="3">
    <location>
        <begin position="1100"/>
        <end position="1119"/>
    </location>
</feature>
<feature type="compositionally biased region" description="Polar residues" evidence="3">
    <location>
        <begin position="1379"/>
        <end position="1399"/>
    </location>
</feature>
<feature type="compositionally biased region" description="Polar residues" evidence="3">
    <location>
        <begin position="1406"/>
        <end position="1415"/>
    </location>
</feature>
<feature type="compositionally biased region" description="Basic residues" evidence="3">
    <location>
        <begin position="1455"/>
        <end position="1468"/>
    </location>
</feature>
<feature type="compositionally biased region" description="Polar residues" evidence="3">
    <location>
        <begin position="1603"/>
        <end position="1616"/>
    </location>
</feature>
<feature type="compositionally biased region" description="Pro residues" evidence="3">
    <location>
        <begin position="1650"/>
        <end position="1663"/>
    </location>
</feature>
<feature type="compositionally biased region" description="Polar residues" evidence="3">
    <location>
        <begin position="2184"/>
        <end position="2197"/>
    </location>
</feature>
<feature type="splice variant" id="VSP_058138" description="In isoform N." evidence="5">
    <original>MLARCVSYQGSCDNINGILTRDYAE</original>
    <variation>MYGQ</variation>
    <location>
        <begin position="1"/>
        <end position="25"/>
    </location>
</feature>
<feature type="splice variant" id="VSP_030259" description="In isoform D." evidence="5">
    <original>LARCVSYQGSCDNINGILTRDYAEIYTDWANYYLERAKSKRKVTDLSADCRDGLLLAEVIEAVTSFKVPDLVKKPKNQQQMFDNVNSCLHVLRSQSVGGLENITTNDICAGRLKAVLALFFALSRFKQQAKQTKSIGVGCGGGVGGSSSTLTGSGSVLGIGIGGLRTPGSSLNQDKNQQEQQQQQQQQQTPQQLAQSLENGNEMVN</original>
    <variation>GNASSSSANGGKSSRKCRSLPNSPDVR</variation>
    <location>
        <begin position="2"/>
        <end position="207"/>
    </location>
</feature>
<keyword id="KW-0025">Alternative splicing</keyword>
<keyword id="KW-0175">Coiled coil</keyword>
<keyword id="KW-0391">Immunity</keyword>
<keyword id="KW-0399">Innate immunity</keyword>
<keyword id="KW-1185">Reference proteome</keyword>
<organism>
    <name type="scientific">Drosophila melanogaster</name>
    <name type="common">Fruit fly</name>
    <dbReference type="NCBI Taxonomy" id="7227"/>
    <lineage>
        <taxon>Eukaryota</taxon>
        <taxon>Metazoa</taxon>
        <taxon>Ecdysozoa</taxon>
        <taxon>Arthropoda</taxon>
        <taxon>Hexapoda</taxon>
        <taxon>Insecta</taxon>
        <taxon>Pterygota</taxon>
        <taxon>Neoptera</taxon>
        <taxon>Endopterygota</taxon>
        <taxon>Diptera</taxon>
        <taxon>Brachycera</taxon>
        <taxon>Muscomorpha</taxon>
        <taxon>Ephydroidea</taxon>
        <taxon>Drosophilidae</taxon>
        <taxon>Drosophila</taxon>
        <taxon>Sophophora</taxon>
    </lineage>
</organism>
<protein>
    <recommendedName>
        <fullName>Protein sickie</fullName>
    </recommendedName>
</protein>
<sequence length="2197" mass="234498">MLARCVSYQGSCDNINGILTRDYAEIYTDWANYYLERAKSKRKVTDLSADCRDGLLLAEVIEAVTSFKVPDLVKKPKNQQQMFDNVNSCLHVLRSQSVGGLENITTNDICAGRLKAVLALFFALSRFKQQAKQTKSIGVGCGGGVGGSSSTLTGSGSVLGIGIGGLRTPGSSLNQDKNQQEQQQQQQQQQTPQQLAQSLENGNEMVNRQIAPAYAKVNGGTAIPLPATVMVQRRCPPDKVRPLPPTPNHTPSIPGLGKSGSDFNTSRPNSPPTSNHTIQSLKSGNNNSLRPPSIKSGIPSPSSPQTAPQKHSMLDKLKLFNKEKQQNAVNAASVASKTQIQSKRTSSSSGFSSARSERSDSSLSLNDGHGSQLKPPSISVSSQKPQPKTKQSKLLAAQQKKEQANKATKLDKKEKSPARSLNKEESGNESRSSTMGRTGKSSLVRAVGGVEKNTPKTSSKSSLHSKSDSKSSLKAPQLLQSPSSGGLPKPIAAIKGTSKLPSLGGGAGHLPAAESQQNQQLLKRETSDISSNISQPPPAEPPISTHAHIHQNQTPPPPYYANSQPTSHISSHGFLSEPSTPQHSSGIYGSSRLPPPKSALSAPRKLEYNAGPHILSSPTHHQRQGLPRPLVNSAPNTPTASPNKFHTIPSKIVGTIYESKEEQLLPAPPPASGGSSILPMRPLLRGYNSHVTLPTRGARGGHHPHQSYLDFCESDIGQGYCSDGDALRVGSSPGGSRFHDIDNGYLSEGSSGLNGPSSSAGGISPGKHFLSMMRARTQLPTTIEERIRNSRGSLDSIGTAANGSSAASQASSSGGSTTTHAQNNNNNNNNNSGGGAKMDGSPHHRPGSRNGRDNWSKMPEPLNGQKVEKSDKSSPSRRSMGGGGSGSSSKQGSPSSSSRTKGVPPSFGYVKRANGSIASTAEQQNIAMMMAAGGAGANGLPCGRTAHVSAVPRTASGRKVAGGTQTLPNDMNKLPPNTQHRSFSLTGPTATQLSQSIRERLATGSHSLPKPGSDLHVFQHRISNRGGTRHDGSLSDTQTYAEVKPEYSSYAMWLKHSNTAGSRLSDGESVEQLQIGSPALTRHGHKMIHNRSGGPGQMAGQMSGNESPYVQSPRMNRSNSIRSTKSEKMYPSMMSRAGEVEIEPYYCLPVGTNGVLTAQMAAAMAAQSQAAQGNPGVGVNVGGVAWSQPTSPTPLTRGPFNTAAGASVLSPTHGTTSAAGLVGPGGGAGGGAMVGHRLTYPKKNDEVHGSAASLLSGGSSLYGNAEERQAHEIRRLKRELQDARDQVLSLSSQLSTNAHVVTAFEQSLSNMTNRLHQLTATAERKDGELTDMRQTIELLRKQSIQAGLTTAHMQSMGVQTQGQGQVQGQALGQALGQPGSDQKPPNSGSQRAINANNGSMPLGMQRQHSTDSMCSLNSISSGCSAAQDKNKANKKKGWLRSSFTKAFSRNAKISKTSRHVGHHHHHNHSQQELASGKLPLHNGHGEPLGLASLATQPAPPLPNSKQSSPAKTVTLIDNAKPIDAIDQEDQHVVEDLKKQLREKDLVLTDIRLEALSSASQLESLKEMMNKMRAEMMSLKHNNERLQKLVTTRSLAGSEASLGQAISPNGSVAGSSEVSRRYSLADSNSRPPMELPARLSEELELEEDCLPPAPAPEQPPPPAPNGVSVAPLSPSTHVDLTPPPPALEAAPMASPVHMASATEELADVCDGKKIAIACYLGQPEAFAKYCEELQELDGFYANGHEADSQSQSERKSNYTSASCNEFVIACTYISGKTTWQNLDYVVRKTFKDYVARIDPGTNLGLNTDSITSYHLGEAKRGPEMGFPELLPCGYIVGSVRTLYICLQGVGSLAFDSLIPRSIVHRYISLLTEHRRLILCGPSGTGKSYLARRLAEFLVARSARGNPSEAIATFNVDHKSSKDLRQYLGHIAEQAAIANGVSELPSVIILDNLHHASALGDVFSCLLSAGPANKLPCIIGTMSQATCNTTNLQLHHNFRWVLTANHMEPVKGFLGRFLRRRLFQLELQTQHPQPELAAVLAWLPSVWQHINRFLEVHSSSDVTIGPRLFLACPMDLKDSQVWFTDIWNYHLSPYLVEAVREGVQLYGRRGGAWNDPSAFIRNSYPWPYGPDSVPPLRQINAEDVGLEGVALTNGDQQDPLLNMLMRLQEAANYSEAQDQESDCASLDSNVTPESSAGAE</sequence>
<comment type="function">
    <text evidence="4">Required for the immune deficiency pathway, which mediates responses to Gram-negative bacterial infection. Favors Rel activation and nuclear translocation.</text>
</comment>
<comment type="alternative products">
    <event type="alternative splicing"/>
    <isoform>
        <id>Q9VIQ9-1</id>
        <name evidence="6">B</name>
        <sequence type="displayed"/>
    </isoform>
    <isoform>
        <id>Q9VIQ9-3</id>
        <name evidence="6">D</name>
        <sequence type="described" ref="VSP_030259"/>
    </isoform>
    <isoform>
        <id>Q9VIQ9-4</id>
        <name evidence="6">N</name>
        <sequence type="described" ref="VSP_058138"/>
    </isoform>
</comment>
<comment type="similarity">
    <text evidence="5">Belongs to the Nav/unc-53 family.</text>
</comment>
<reference key="1">
    <citation type="journal article" date="2000" name="Science">
        <title>The genome sequence of Drosophila melanogaster.</title>
        <authorList>
            <person name="Adams M.D."/>
            <person name="Celniker S.E."/>
            <person name="Holt R.A."/>
            <person name="Evans C.A."/>
            <person name="Gocayne J.D."/>
            <person name="Amanatides P.G."/>
            <person name="Scherer S.E."/>
            <person name="Li P.W."/>
            <person name="Hoskins R.A."/>
            <person name="Galle R.F."/>
            <person name="George R.A."/>
            <person name="Lewis S.E."/>
            <person name="Richards S."/>
            <person name="Ashburner M."/>
            <person name="Henderson S.N."/>
            <person name="Sutton G.G."/>
            <person name="Wortman J.R."/>
            <person name="Yandell M.D."/>
            <person name="Zhang Q."/>
            <person name="Chen L.X."/>
            <person name="Brandon R.C."/>
            <person name="Rogers Y.-H.C."/>
            <person name="Blazej R.G."/>
            <person name="Champe M."/>
            <person name="Pfeiffer B.D."/>
            <person name="Wan K.H."/>
            <person name="Doyle C."/>
            <person name="Baxter E.G."/>
            <person name="Helt G."/>
            <person name="Nelson C.R."/>
            <person name="Miklos G.L.G."/>
            <person name="Abril J.F."/>
            <person name="Agbayani A."/>
            <person name="An H.-J."/>
            <person name="Andrews-Pfannkoch C."/>
            <person name="Baldwin D."/>
            <person name="Ballew R.M."/>
            <person name="Basu A."/>
            <person name="Baxendale J."/>
            <person name="Bayraktaroglu L."/>
            <person name="Beasley E.M."/>
            <person name="Beeson K.Y."/>
            <person name="Benos P.V."/>
            <person name="Berman B.P."/>
            <person name="Bhandari D."/>
            <person name="Bolshakov S."/>
            <person name="Borkova D."/>
            <person name="Botchan M.R."/>
            <person name="Bouck J."/>
            <person name="Brokstein P."/>
            <person name="Brottier P."/>
            <person name="Burtis K.C."/>
            <person name="Busam D.A."/>
            <person name="Butler H."/>
            <person name="Cadieu E."/>
            <person name="Center A."/>
            <person name="Chandra I."/>
            <person name="Cherry J.M."/>
            <person name="Cawley S."/>
            <person name="Dahlke C."/>
            <person name="Davenport L.B."/>
            <person name="Davies P."/>
            <person name="de Pablos B."/>
            <person name="Delcher A."/>
            <person name="Deng Z."/>
            <person name="Mays A.D."/>
            <person name="Dew I."/>
            <person name="Dietz S.M."/>
            <person name="Dodson K."/>
            <person name="Doup L.E."/>
            <person name="Downes M."/>
            <person name="Dugan-Rocha S."/>
            <person name="Dunkov B.C."/>
            <person name="Dunn P."/>
            <person name="Durbin K.J."/>
            <person name="Evangelista C.C."/>
            <person name="Ferraz C."/>
            <person name="Ferriera S."/>
            <person name="Fleischmann W."/>
            <person name="Fosler C."/>
            <person name="Gabrielian A.E."/>
            <person name="Garg N.S."/>
            <person name="Gelbart W.M."/>
            <person name="Glasser K."/>
            <person name="Glodek A."/>
            <person name="Gong F."/>
            <person name="Gorrell J.H."/>
            <person name="Gu Z."/>
            <person name="Guan P."/>
            <person name="Harris M."/>
            <person name="Harris N.L."/>
            <person name="Harvey D.A."/>
            <person name="Heiman T.J."/>
            <person name="Hernandez J.R."/>
            <person name="Houck J."/>
            <person name="Hostin D."/>
            <person name="Houston K.A."/>
            <person name="Howland T.J."/>
            <person name="Wei M.-H."/>
            <person name="Ibegwam C."/>
            <person name="Jalali M."/>
            <person name="Kalush F."/>
            <person name="Karpen G.H."/>
            <person name="Ke Z."/>
            <person name="Kennison J.A."/>
            <person name="Ketchum K.A."/>
            <person name="Kimmel B.E."/>
            <person name="Kodira C.D."/>
            <person name="Kraft C.L."/>
            <person name="Kravitz S."/>
            <person name="Kulp D."/>
            <person name="Lai Z."/>
            <person name="Lasko P."/>
            <person name="Lei Y."/>
            <person name="Levitsky A.A."/>
            <person name="Li J.H."/>
            <person name="Li Z."/>
            <person name="Liang Y."/>
            <person name="Lin X."/>
            <person name="Liu X."/>
            <person name="Mattei B."/>
            <person name="McIntosh T.C."/>
            <person name="McLeod M.P."/>
            <person name="McPherson D."/>
            <person name="Merkulov G."/>
            <person name="Milshina N.V."/>
            <person name="Mobarry C."/>
            <person name="Morris J."/>
            <person name="Moshrefi A."/>
            <person name="Mount S.M."/>
            <person name="Moy M."/>
            <person name="Murphy B."/>
            <person name="Murphy L."/>
            <person name="Muzny D.M."/>
            <person name="Nelson D.L."/>
            <person name="Nelson D.R."/>
            <person name="Nelson K.A."/>
            <person name="Nixon K."/>
            <person name="Nusskern D.R."/>
            <person name="Pacleb J.M."/>
            <person name="Palazzolo M."/>
            <person name="Pittman G.S."/>
            <person name="Pan S."/>
            <person name="Pollard J."/>
            <person name="Puri V."/>
            <person name="Reese M.G."/>
            <person name="Reinert K."/>
            <person name="Remington K."/>
            <person name="Saunders R.D.C."/>
            <person name="Scheeler F."/>
            <person name="Shen H."/>
            <person name="Shue B.C."/>
            <person name="Siden-Kiamos I."/>
            <person name="Simpson M."/>
            <person name="Skupski M.P."/>
            <person name="Smith T.J."/>
            <person name="Spier E."/>
            <person name="Spradling A.C."/>
            <person name="Stapleton M."/>
            <person name="Strong R."/>
            <person name="Sun E."/>
            <person name="Svirskas R."/>
            <person name="Tector C."/>
            <person name="Turner R."/>
            <person name="Venter E."/>
            <person name="Wang A.H."/>
            <person name="Wang X."/>
            <person name="Wang Z.-Y."/>
            <person name="Wassarman D.A."/>
            <person name="Weinstock G.M."/>
            <person name="Weissenbach J."/>
            <person name="Williams S.M."/>
            <person name="Woodage T."/>
            <person name="Worley K.C."/>
            <person name="Wu D."/>
            <person name="Yang S."/>
            <person name="Yao Q.A."/>
            <person name="Ye J."/>
            <person name="Yeh R.-F."/>
            <person name="Zaveri J.S."/>
            <person name="Zhan M."/>
            <person name="Zhang G."/>
            <person name="Zhao Q."/>
            <person name="Zheng L."/>
            <person name="Zheng X.H."/>
            <person name="Zhong F.N."/>
            <person name="Zhong W."/>
            <person name="Zhou X."/>
            <person name="Zhu S.C."/>
            <person name="Zhu X."/>
            <person name="Smith H.O."/>
            <person name="Gibbs R.A."/>
            <person name="Myers E.W."/>
            <person name="Rubin G.M."/>
            <person name="Venter J.C."/>
        </authorList>
    </citation>
    <scope>NUCLEOTIDE SEQUENCE [LARGE SCALE GENOMIC DNA]</scope>
    <source>
        <strain>Berkeley</strain>
    </source>
</reference>
<reference key="2">
    <citation type="journal article" date="2002" name="Genome Biol.">
        <title>Annotation of the Drosophila melanogaster euchromatic genome: a systematic review.</title>
        <authorList>
            <person name="Misra S."/>
            <person name="Crosby M.A."/>
            <person name="Mungall C.J."/>
            <person name="Matthews B.B."/>
            <person name="Campbell K.S."/>
            <person name="Hradecky P."/>
            <person name="Huang Y."/>
            <person name="Kaminker J.S."/>
            <person name="Millburn G.H."/>
            <person name="Prochnik S.E."/>
            <person name="Smith C.D."/>
            <person name="Tupy J.L."/>
            <person name="Whitfield E.J."/>
            <person name="Bayraktaroglu L."/>
            <person name="Berman B.P."/>
            <person name="Bettencourt B.R."/>
            <person name="Celniker S.E."/>
            <person name="de Grey A.D.N.J."/>
            <person name="Drysdale R.A."/>
            <person name="Harris N.L."/>
            <person name="Richter J."/>
            <person name="Russo S."/>
            <person name="Schroeder A.J."/>
            <person name="Shu S.Q."/>
            <person name="Stapleton M."/>
            <person name="Yamada C."/>
            <person name="Ashburner M."/>
            <person name="Gelbart W.M."/>
            <person name="Rubin G.M."/>
            <person name="Lewis S.E."/>
        </authorList>
    </citation>
    <scope>GENOME REANNOTATION</scope>
    <scope>ALTERNATIVE SPLICING</scope>
    <source>
        <strain>Berkeley</strain>
    </source>
</reference>
<reference key="3">
    <citation type="journal article" date="2004" name="PLoS Biol.">
        <title>Functional dissection of an innate immune response by a genome-wide RNAi screen.</title>
        <authorList>
            <person name="Foley E."/>
            <person name="O'Farrell P.H."/>
        </authorList>
    </citation>
    <scope>FUNCTION</scope>
</reference>
<accession>Q9VIQ9</accession>
<accession>Q7KT30</accession>
<accession>Q7KT31</accession>
<dbReference type="EMBL" id="AE014134">
    <property type="protein sequence ID" value="AAF53856.3"/>
    <property type="molecule type" value="Genomic_DNA"/>
</dbReference>
<dbReference type="EMBL" id="AE014134">
    <property type="protein sequence ID" value="AAS64722.2"/>
    <property type="molecule type" value="Genomic_DNA"/>
</dbReference>
<dbReference type="EMBL" id="AE014134">
    <property type="protein sequence ID" value="AAS64723.2"/>
    <property type="molecule type" value="Genomic_DNA"/>
</dbReference>
<dbReference type="RefSeq" id="NP_001097183.1">
    <molecule id="Q9VIQ9-3"/>
    <property type="nucleotide sequence ID" value="NM_001103713.4"/>
</dbReference>
<dbReference type="RefSeq" id="NP_001260605.1">
    <molecule id="Q9VIQ9-3"/>
    <property type="nucleotide sequence ID" value="NM_001273676.1"/>
</dbReference>
<dbReference type="RefSeq" id="NP_995729.2">
    <molecule id="Q9VIQ9-1"/>
    <property type="nucleotide sequence ID" value="NM_206007.5"/>
</dbReference>
<dbReference type="RefSeq" id="NP_995730.2">
    <molecule id="Q9VIQ9-4"/>
    <property type="nucleotide sequence ID" value="NM_206008.4"/>
</dbReference>
<dbReference type="BioGRID" id="61249">
    <property type="interactions" value="12"/>
</dbReference>
<dbReference type="FunCoup" id="Q9VIQ9">
    <property type="interactions" value="418"/>
</dbReference>
<dbReference type="IntAct" id="Q9VIQ9">
    <property type="interactions" value="4"/>
</dbReference>
<dbReference type="STRING" id="7227.FBpp0302887"/>
<dbReference type="GlyGen" id="Q9VIQ9">
    <property type="glycosylation" value="1 site"/>
</dbReference>
<dbReference type="PaxDb" id="7227-FBpp0302887"/>
<dbReference type="EnsemblMetazoa" id="FBtr0329840">
    <molecule id="Q9VIQ9-3"/>
    <property type="protein sequence ID" value="FBpp0302881"/>
    <property type="gene ID" value="FBgn0263873"/>
</dbReference>
<dbReference type="EnsemblMetazoa" id="FBtr0329842">
    <molecule id="Q9VIQ9-1"/>
    <property type="protein sequence ID" value="FBpp0302883"/>
    <property type="gene ID" value="FBgn0263873"/>
</dbReference>
<dbReference type="EnsemblMetazoa" id="FBtr0329843">
    <molecule id="Q9VIQ9-3"/>
    <property type="protein sequence ID" value="FBpp0302884"/>
    <property type="gene ID" value="FBgn0263873"/>
</dbReference>
<dbReference type="EnsemblMetazoa" id="FBtr0344856">
    <molecule id="Q9VIQ9-4"/>
    <property type="protein sequence ID" value="FBpp0311171"/>
    <property type="gene ID" value="FBgn0263873"/>
</dbReference>
<dbReference type="GeneID" id="35277"/>
<dbReference type="KEGG" id="dme:Dmel_CG43720"/>
<dbReference type="UCSC" id="CG34343-RB">
    <molecule id="Q9VIQ9-1"/>
    <property type="organism name" value="d. melanogaster"/>
</dbReference>
<dbReference type="AGR" id="FB:FBgn0263873"/>
<dbReference type="CTD" id="35277"/>
<dbReference type="FlyBase" id="FBgn0263873">
    <property type="gene designation" value="sick"/>
</dbReference>
<dbReference type="VEuPathDB" id="VectorBase:FBgn0263873"/>
<dbReference type="eggNOG" id="ENOG502QPT3">
    <property type="taxonomic scope" value="Eukaryota"/>
</dbReference>
<dbReference type="InParanoid" id="Q9VIQ9"/>
<dbReference type="OrthoDB" id="2161974at2759"/>
<dbReference type="PhylomeDB" id="Q9VIQ9"/>
<dbReference type="BioGRID-ORCS" id="35277">
    <property type="hits" value="0 hits in 3 CRISPR screens"/>
</dbReference>
<dbReference type="ChiTaRS" id="sick">
    <property type="organism name" value="fly"/>
</dbReference>
<dbReference type="GenomeRNAi" id="35277"/>
<dbReference type="PRO" id="PR:Q9VIQ9"/>
<dbReference type="Proteomes" id="UP000000803">
    <property type="component" value="Chromosome 2L"/>
</dbReference>
<dbReference type="Bgee" id="FBgn0263873">
    <property type="expression patterns" value="Expressed in adult tracheocyte (Drosophila) in body wall and 228 other cell types or tissues"/>
</dbReference>
<dbReference type="ExpressionAtlas" id="Q9VIQ9">
    <property type="expression patterns" value="baseline and differential"/>
</dbReference>
<dbReference type="GO" id="GO:0005524">
    <property type="term" value="F:ATP binding"/>
    <property type="evidence" value="ECO:0007669"/>
    <property type="project" value="InterPro"/>
</dbReference>
<dbReference type="GO" id="GO:0016887">
    <property type="term" value="F:ATP hydrolysis activity"/>
    <property type="evidence" value="ECO:0007669"/>
    <property type="project" value="InterPro"/>
</dbReference>
<dbReference type="GO" id="GO:0007015">
    <property type="term" value="P:actin filament organization"/>
    <property type="evidence" value="ECO:0000315"/>
    <property type="project" value="FlyBase"/>
</dbReference>
<dbReference type="GO" id="GO:0007409">
    <property type="term" value="P:axonogenesis"/>
    <property type="evidence" value="ECO:0000315"/>
    <property type="project" value="FlyBase"/>
</dbReference>
<dbReference type="GO" id="GO:0050829">
    <property type="term" value="P:defense response to Gram-negative bacterium"/>
    <property type="evidence" value="ECO:0000315"/>
    <property type="project" value="UniProtKB"/>
</dbReference>
<dbReference type="GO" id="GO:0045087">
    <property type="term" value="P:innate immune response"/>
    <property type="evidence" value="ECO:0007669"/>
    <property type="project" value="UniProtKB-KW"/>
</dbReference>
<dbReference type="GO" id="GO:0061059">
    <property type="term" value="P:positive regulation of peptidoglycan recognition protein signaling pathway"/>
    <property type="evidence" value="ECO:0000315"/>
    <property type="project" value="FlyBase"/>
</dbReference>
<dbReference type="CDD" id="cd00009">
    <property type="entry name" value="AAA"/>
    <property type="match status" value="1"/>
</dbReference>
<dbReference type="CDD" id="cd21212">
    <property type="entry name" value="CH_NAV2-like"/>
    <property type="match status" value="1"/>
</dbReference>
<dbReference type="FunFam" id="3.40.50.300:FF:001111">
    <property type="entry name" value="neuron navigator 2 isoform X3"/>
    <property type="match status" value="1"/>
</dbReference>
<dbReference type="FunFam" id="1.10.418.10:FF:000074">
    <property type="entry name" value="protein sickie isoform X1"/>
    <property type="match status" value="1"/>
</dbReference>
<dbReference type="Gene3D" id="1.10.418.10">
    <property type="entry name" value="Calponin-like domain"/>
    <property type="match status" value="1"/>
</dbReference>
<dbReference type="Gene3D" id="3.40.50.300">
    <property type="entry name" value="P-loop containing nucleotide triphosphate hydrolases"/>
    <property type="match status" value="1"/>
</dbReference>
<dbReference type="InterPro" id="IPR003593">
    <property type="entry name" value="AAA+_ATPase"/>
</dbReference>
<dbReference type="InterPro" id="IPR003959">
    <property type="entry name" value="ATPase_AAA_core"/>
</dbReference>
<dbReference type="InterPro" id="IPR001715">
    <property type="entry name" value="CH_dom"/>
</dbReference>
<dbReference type="InterPro" id="IPR036872">
    <property type="entry name" value="CH_dom_sf"/>
</dbReference>
<dbReference type="InterPro" id="IPR039041">
    <property type="entry name" value="Nav/unc-53"/>
</dbReference>
<dbReference type="InterPro" id="IPR027417">
    <property type="entry name" value="P-loop_NTPase"/>
</dbReference>
<dbReference type="PANTHER" id="PTHR12784:SF28">
    <property type="entry name" value="PROTEIN SICKIE"/>
    <property type="match status" value="1"/>
</dbReference>
<dbReference type="PANTHER" id="PTHR12784">
    <property type="entry name" value="STEERIN"/>
    <property type="match status" value="1"/>
</dbReference>
<dbReference type="Pfam" id="PF00004">
    <property type="entry name" value="AAA"/>
    <property type="match status" value="1"/>
</dbReference>
<dbReference type="Pfam" id="PF25408">
    <property type="entry name" value="AAA_lid_NAV1"/>
    <property type="match status" value="1"/>
</dbReference>
<dbReference type="Pfam" id="PF00307">
    <property type="entry name" value="CH"/>
    <property type="match status" value="1"/>
</dbReference>
<dbReference type="Pfam" id="PF23092">
    <property type="entry name" value="Ubiquitin_6"/>
    <property type="match status" value="1"/>
</dbReference>
<dbReference type="SMART" id="SM00382">
    <property type="entry name" value="AAA"/>
    <property type="match status" value="1"/>
</dbReference>
<dbReference type="SMART" id="SM00033">
    <property type="entry name" value="CH"/>
    <property type="match status" value="1"/>
</dbReference>
<dbReference type="SUPFAM" id="SSF47576">
    <property type="entry name" value="Calponin-homology domain, CH-domain"/>
    <property type="match status" value="1"/>
</dbReference>
<dbReference type="SUPFAM" id="SSF52540">
    <property type="entry name" value="P-loop containing nucleoside triphosphate hydrolases"/>
    <property type="match status" value="1"/>
</dbReference>
<dbReference type="PROSITE" id="PS50021">
    <property type="entry name" value="CH"/>
    <property type="match status" value="1"/>
</dbReference>